<gene>
    <name evidence="6" type="primary">gor</name>
    <name type="ordered locus">PF0464</name>
</gene>
<reference evidence="10" key="1">
    <citation type="journal article" date="1998" name="J. Biol. Chem.">
        <title>The ferredoxin-dependent conversion of glyceraldehyde-3-phosphate in the hyperthermophilic archaeon Pyrococcus furiosus represents a novel site of glycolytic regulation.</title>
        <authorList>
            <person name="van der Oost J."/>
            <person name="Schut G."/>
            <person name="Kengen S.W."/>
            <person name="Hagen W.R."/>
            <person name="Thomm M."/>
            <person name="de Vos W.M."/>
        </authorList>
    </citation>
    <scope>NUCLEOTIDE SEQUENCE [GENOMIC DNA]</scope>
    <scope>FUNCTION</scope>
    <scope>INDUCTION</scope>
    <scope>EPR SPECTROSCOPY</scope>
    <source>
        <strain evidence="10">ATCC 43587 / DSM 3638 / JCM 8422 / Vc1</strain>
    </source>
</reference>
<reference evidence="11" key="2">
    <citation type="journal article" date="1999" name="Genetics">
        <title>Divergence of the hyperthermophilic archaea Pyrococcus furiosus and P. horikoshii inferred from complete genomic sequences.</title>
        <authorList>
            <person name="Maeder D.L."/>
            <person name="Weiss R.B."/>
            <person name="Dunn D.M."/>
            <person name="Cherry J.L."/>
            <person name="Gonzalez J.M."/>
            <person name="DiRuggiero J."/>
            <person name="Robb F.T."/>
        </authorList>
    </citation>
    <scope>NUCLEOTIDE SEQUENCE [LARGE SCALE GENOMIC DNA]</scope>
    <source>
        <strain>ATCC 43587 / DSM 3638 / JCM 8422 / Vc1</strain>
    </source>
</reference>
<reference evidence="7" key="3">
    <citation type="journal article" date="1995" name="J. Biol. Chem.">
        <title>Glyceraldehyde-3-phosphate ferredoxin oxidoreductase, a novel tungsten-containing enzyme with a potential glycolytic role in the hyperthermophilic archaeon Pyrococcus furiosus.</title>
        <authorList>
            <person name="Mukund S."/>
            <person name="Adams M.W."/>
        </authorList>
    </citation>
    <scope>PROTEIN SEQUENCE OF 1-38</scope>
    <scope>FUNCTION</scope>
    <scope>CATALYTIC ACTIVITY</scope>
    <scope>COFACTOR</scope>
    <scope>ACTIVITY REGULATION</scope>
    <scope>BIOPHYSICOCHEMICAL PROPERTIES</scope>
    <scope>SUBUNIT</scope>
    <source>
        <strain evidence="3">ATCC 43587 / DSM 3638 / JCM 8422 / Vc1</strain>
    </source>
</reference>
<reference evidence="7" key="4">
    <citation type="journal article" date="2001" name="Methods Enzymol.">
        <title>Aldehyde oxidoreductases from Pyrococcus furiosus.</title>
        <authorList>
            <person name="Roy R."/>
            <person name="Menon A.L."/>
            <person name="Adams M.W."/>
        </authorList>
    </citation>
    <scope>FUNCTION</scope>
    <scope>CATALYTIC ACTIVITY</scope>
    <scope>ACTIVITY REGULATION</scope>
    <scope>BIOPHYSICOCHEMICAL PROPERTIES</scope>
    <scope>SUBUNIT</scope>
    <source>
        <strain evidence="2">ATCC 43587 / DSM 3638 / JCM 8422 / Vc1</strain>
    </source>
</reference>
<dbReference type="EC" id="1.2.7.6" evidence="2 3"/>
<dbReference type="EMBL" id="U74298">
    <property type="protein sequence ID" value="AAC70892.1"/>
    <property type="molecule type" value="Genomic_DNA"/>
</dbReference>
<dbReference type="EMBL" id="AE009950">
    <property type="protein sequence ID" value="AAL80588.1"/>
    <property type="molecule type" value="Genomic_DNA"/>
</dbReference>
<dbReference type="PIR" id="A56374">
    <property type="entry name" value="A56374"/>
</dbReference>
<dbReference type="RefSeq" id="WP_011011581.1">
    <property type="nucleotide sequence ID" value="NZ_CP023154.1"/>
</dbReference>
<dbReference type="SMR" id="Q8U3K2"/>
<dbReference type="IntAct" id="Q8U3K2">
    <property type="interactions" value="1"/>
</dbReference>
<dbReference type="STRING" id="186497.PF0464"/>
<dbReference type="PaxDb" id="186497-PF0464"/>
<dbReference type="GeneID" id="41712265"/>
<dbReference type="KEGG" id="pfu:PF0464"/>
<dbReference type="PATRIC" id="fig|186497.12.peg.488"/>
<dbReference type="eggNOG" id="arCOG05072">
    <property type="taxonomic scope" value="Archaea"/>
</dbReference>
<dbReference type="HOGENOM" id="CLU_440510_0_0_2"/>
<dbReference type="OrthoDB" id="84495at2157"/>
<dbReference type="PhylomeDB" id="Q8U3K2"/>
<dbReference type="BRENDA" id="1.2.7.6">
    <property type="organism ID" value="5243"/>
</dbReference>
<dbReference type="SABIO-RK" id="Q8U3K2"/>
<dbReference type="Proteomes" id="UP000001013">
    <property type="component" value="Chromosome"/>
</dbReference>
<dbReference type="GO" id="GO:0051539">
    <property type="term" value="F:4 iron, 4 sulfur cluster binding"/>
    <property type="evidence" value="ECO:0007669"/>
    <property type="project" value="UniProtKB-KW"/>
</dbReference>
<dbReference type="GO" id="GO:0009055">
    <property type="term" value="F:electron transfer activity"/>
    <property type="evidence" value="ECO:0000314"/>
    <property type="project" value="UniProtKB"/>
</dbReference>
<dbReference type="GO" id="GO:0043797">
    <property type="term" value="F:glyceraldehyde-3-phosphate dehydrogenase (ferredoxin) activity"/>
    <property type="evidence" value="ECO:0000314"/>
    <property type="project" value="UniProtKB"/>
</dbReference>
<dbReference type="GO" id="GO:0046872">
    <property type="term" value="F:metal ion binding"/>
    <property type="evidence" value="ECO:0007669"/>
    <property type="project" value="UniProtKB-KW"/>
</dbReference>
<dbReference type="GO" id="GO:0006110">
    <property type="term" value="P:regulation of glycolytic process"/>
    <property type="evidence" value="ECO:0000314"/>
    <property type="project" value="UniProtKB"/>
</dbReference>
<dbReference type="Gene3D" id="1.10.569.10">
    <property type="entry name" value="Aldehyde Ferredoxin Oxidoreductase Protein, subunit A, domain 2"/>
    <property type="match status" value="1"/>
</dbReference>
<dbReference type="Gene3D" id="3.60.9.10">
    <property type="entry name" value="Aldehyde ferredoxin oxidoreductase, N-terminal domain"/>
    <property type="match status" value="1"/>
</dbReference>
<dbReference type="InterPro" id="IPR013984">
    <property type="entry name" value="Ald_Fedxn_OxRdtase_dom2"/>
</dbReference>
<dbReference type="InterPro" id="IPR013983">
    <property type="entry name" value="Ald_Fedxn_OxRdtase_N"/>
</dbReference>
<dbReference type="InterPro" id="IPR036503">
    <property type="entry name" value="Ald_Fedxn_OxRdtase_N_sf"/>
</dbReference>
<dbReference type="InterPro" id="IPR053617">
    <property type="entry name" value="GAPOR"/>
</dbReference>
<dbReference type="InterPro" id="IPR001203">
    <property type="entry name" value="OxRdtase_Ald_Fedxn_C"/>
</dbReference>
<dbReference type="InterPro" id="IPR036021">
    <property type="entry name" value="Tungsten_al_ferr_oxy-like_C"/>
</dbReference>
<dbReference type="InterPro" id="IPR051919">
    <property type="entry name" value="W-dependent_AOR"/>
</dbReference>
<dbReference type="NCBIfam" id="NF040818">
    <property type="entry name" value="GAPOR_Arch"/>
    <property type="match status" value="1"/>
</dbReference>
<dbReference type="PANTHER" id="PTHR30038">
    <property type="entry name" value="ALDEHYDE FERREDOXIN OXIDOREDUCTASE"/>
    <property type="match status" value="1"/>
</dbReference>
<dbReference type="PANTHER" id="PTHR30038:SF7">
    <property type="entry name" value="TUNGSTEN-CONTAINING GLYCERALDEHYDE-3-PHOSPHATE:FERREDOXIN OXIDOREDUCTASE"/>
    <property type="match status" value="1"/>
</dbReference>
<dbReference type="Pfam" id="PF01314">
    <property type="entry name" value="AFOR_C"/>
    <property type="match status" value="1"/>
</dbReference>
<dbReference type="Pfam" id="PF02730">
    <property type="entry name" value="AFOR_N"/>
    <property type="match status" value="1"/>
</dbReference>
<dbReference type="SMART" id="SM00790">
    <property type="entry name" value="AFOR_N"/>
    <property type="match status" value="1"/>
</dbReference>
<dbReference type="SUPFAM" id="SSF48310">
    <property type="entry name" value="Aldehyde ferredoxin oxidoreductase, C-terminal domains"/>
    <property type="match status" value="1"/>
</dbReference>
<dbReference type="SUPFAM" id="SSF56228">
    <property type="entry name" value="Aldehyde ferredoxin oxidoreductase, N-terminal domain"/>
    <property type="match status" value="1"/>
</dbReference>
<organism>
    <name type="scientific">Pyrococcus furiosus (strain ATCC 43587 / DSM 3638 / JCM 8422 / Vc1)</name>
    <dbReference type="NCBI Taxonomy" id="186497"/>
    <lineage>
        <taxon>Archaea</taxon>
        <taxon>Methanobacteriati</taxon>
        <taxon>Methanobacteriota</taxon>
        <taxon>Thermococci</taxon>
        <taxon>Thermococcales</taxon>
        <taxon>Thermococcaceae</taxon>
        <taxon>Pyrococcus</taxon>
    </lineage>
</organism>
<proteinExistence type="evidence at protein level"/>
<name>GAPOR_PYRFU</name>
<evidence type="ECO:0000250" key="1">
    <source>
        <dbReference type="UniProtKB" id="Q51739"/>
    </source>
</evidence>
<evidence type="ECO:0000269" key="2">
    <source>
    </source>
</evidence>
<evidence type="ECO:0000269" key="3">
    <source>
    </source>
</evidence>
<evidence type="ECO:0000269" key="4">
    <source>
    </source>
</evidence>
<evidence type="ECO:0000303" key="5">
    <source>
    </source>
</evidence>
<evidence type="ECO:0000303" key="6">
    <source>
    </source>
</evidence>
<evidence type="ECO:0000305" key="7"/>
<evidence type="ECO:0000305" key="8">
    <source>
    </source>
</evidence>
<evidence type="ECO:0000305" key="9">
    <source>
    </source>
</evidence>
<evidence type="ECO:0000312" key="10">
    <source>
        <dbReference type="EMBL" id="AAC70892.1"/>
    </source>
</evidence>
<evidence type="ECO:0000312" key="11">
    <source>
        <dbReference type="EMBL" id="AAL80588.1"/>
    </source>
</evidence>
<keyword id="KW-0004">4Fe-4S</keyword>
<keyword id="KW-0903">Direct protein sequencing</keyword>
<keyword id="KW-0408">Iron</keyword>
<keyword id="KW-0411">Iron-sulfur</keyword>
<keyword id="KW-0479">Metal-binding</keyword>
<keyword id="KW-0560">Oxidoreductase</keyword>
<keyword id="KW-1185">Reference proteome</keyword>
<keyword id="KW-0826">Tungsten</keyword>
<keyword id="KW-0862">Zinc</keyword>
<feature type="chain" id="PRO_0000419806" description="Glyceraldehyde-3-phosphate:ferredoxin oxidoreductase">
    <location>
        <begin position="1"/>
        <end position="653"/>
    </location>
</feature>
<feature type="binding site" evidence="1">
    <location>
        <position position="70"/>
    </location>
    <ligand>
        <name>tungstopterin</name>
        <dbReference type="ChEBI" id="CHEBI:30402"/>
    </ligand>
</feature>
<feature type="binding site" evidence="1">
    <location>
        <position position="89"/>
    </location>
    <ligand>
        <name>tungstopterin</name>
        <dbReference type="ChEBI" id="CHEBI:30402"/>
    </ligand>
</feature>
<feature type="binding site" evidence="1">
    <location>
        <position position="196"/>
    </location>
    <ligand>
        <name>tungstopterin</name>
        <dbReference type="ChEBI" id="CHEBI:30402"/>
    </ligand>
</feature>
<feature type="binding site" evidence="1">
    <location>
        <position position="197"/>
    </location>
    <ligand>
        <name>tungstopterin</name>
        <dbReference type="ChEBI" id="CHEBI:30402"/>
    </ligand>
</feature>
<feature type="binding site" evidence="1">
    <location>
        <position position="199"/>
    </location>
    <ligand>
        <name>tungstopterin</name>
        <dbReference type="ChEBI" id="CHEBI:30402"/>
    </ligand>
</feature>
<feature type="binding site" evidence="1">
    <location>
        <position position="206"/>
    </location>
    <ligand>
        <name>tungstopterin</name>
        <dbReference type="ChEBI" id="CHEBI:30402"/>
    </ligand>
</feature>
<feature type="binding site" evidence="1">
    <location>
        <position position="333"/>
    </location>
    <ligand>
        <name>[4Fe-4S] cluster</name>
        <dbReference type="ChEBI" id="CHEBI:49883"/>
    </ligand>
</feature>
<feature type="binding site" evidence="1">
    <location>
        <position position="337"/>
    </location>
    <ligand>
        <name>[4Fe-4S] cluster</name>
        <dbReference type="ChEBI" id="CHEBI:49883"/>
    </ligand>
</feature>
<feature type="binding site" evidence="1">
    <location>
        <position position="378"/>
    </location>
    <ligand>
        <name>tungstopterin</name>
        <dbReference type="ChEBI" id="CHEBI:30402"/>
    </ligand>
</feature>
<feature type="binding site" evidence="1">
    <location>
        <position position="383"/>
    </location>
    <ligand>
        <name>tungstopterin</name>
        <dbReference type="ChEBI" id="CHEBI:30402"/>
    </ligand>
</feature>
<feature type="binding site" evidence="1">
    <location>
        <position position="544"/>
    </location>
    <ligand>
        <name>tungstopterin</name>
        <dbReference type="ChEBI" id="CHEBI:30402"/>
    </ligand>
</feature>
<feature type="binding site" evidence="1">
    <location>
        <position position="549"/>
    </location>
    <ligand>
        <name>[4Fe-4S] cluster</name>
        <dbReference type="ChEBI" id="CHEBI:49883"/>
    </ligand>
</feature>
<feature type="sequence conflict" description="In Ref. 1; AAC70892." evidence="7" ref="1">
    <original>E</original>
    <variation>D</variation>
    <location>
        <position position="493"/>
    </location>
</feature>
<feature type="sequence conflict" description="In Ref. 1; AAC70892." evidence="7" ref="1">
    <original>W</original>
    <variation>C</variation>
    <location>
        <position position="599"/>
    </location>
</feature>
<protein>
    <recommendedName>
        <fullName evidence="5">Glyceraldehyde-3-phosphate:ferredoxin oxidoreductase</fullName>
        <shortName evidence="5 6">GAPOR</shortName>
        <ecNumber evidence="2 3">1.2.7.6</ecNumber>
    </recommendedName>
    <alternativeName>
        <fullName>Tungsten-containing glyceraldehyde-3-phosphate ferredoxin oxidoreductase</fullName>
    </alternativeName>
</protein>
<accession>Q8U3K2</accession>
<accession>O93720</accession>
<accession>Q9UWI2</accession>
<sequence length="653" mass="73948">MKFSVLKLDVGKREVEAQEIEREDIFGVVDYGIMRHNELRTYEVDPYDPRNIVIFGIGPFAGSVLPGSHRLVFFFRSPLYGGLFPSTMGGAGYQFKNVGVDFVEIHGKAEKPTVIILKNDGEKLSVDFYEIELEKLLDVWKEYKGEEGVYALTQYLLDNLASVFEGMEFRIAVVGPAALNTNMGAIFSQALRNGKRAVGSEDWAARGGPGSVLLRAHNVVAIAFGGKKRKREFPGEDISDVKVAKRVVEGIHKKAQRDVINESTVKYRYNPKLNTGGTFGGNYPAEGDLVPVLNWQMPYIPKEERIKIHELIMKYYWEPFNKESIQPKNWTTCGEPCPVVCKKHRKGHHVEYEPYEANGPLSGSIYLYASDISVHAVDAMGFDAIEFGGTAAWVLELVHKGLLKPAEVGISDVPEFTKDDLITKPVEASEKNAKLVAELAHSIAFGKTEVARIIGMGKRKASKILDEKFKDRLSYGESFKDYGVYTPLGDDGEINPTMYWAIGNFIPLPIQGRYWTFYQFGVFLEPEELAQKIVSSALWEFWYDNVGWCRFHRGWMKKVLKALFMEAYGVSIDMEEHAKKQIRKLIDYLKKAGYEPVFWDSMRVIDLVAKGSEEFGNENWAKKFKEDKIGTAKEYLKRVLDAYSQLIGTEWTL</sequence>
<comment type="function">
    <text evidence="2 3 4">Catalyzes the oxidation of glyceraldehyde-3-phosphate to 3-phosphoglycerate (PubMed:11265456, PubMed:7721730, PubMed:9774434). Uses ferredoxin as electron acceptor (PubMed:7721730). In vitro can also use benzyl viologen, but not NADP or NAD, as electron acceptor (PubMed:7721730). Probably acts as a glycolytic enzyme in place of glyceraldehyde-3-phosphate dehydrogenase (GAPDH) and phosphoglycerate kinase (PGK) in an unusual Emden-Meyerhof glycolysis (PubMed:11265456, PubMed:7721730).</text>
</comment>
<comment type="catalytic activity">
    <reaction evidence="2 3">
        <text>D-glyceraldehyde 3-phosphate + 2 oxidized [2Fe-2S]-[ferredoxin] + H2O = (2R)-3-phosphoglycerate + 2 reduced [2Fe-2S]-[ferredoxin] + 3 H(+)</text>
        <dbReference type="Rhea" id="RHEA:24148"/>
        <dbReference type="Rhea" id="RHEA-COMP:10000"/>
        <dbReference type="Rhea" id="RHEA-COMP:10001"/>
        <dbReference type="ChEBI" id="CHEBI:15377"/>
        <dbReference type="ChEBI" id="CHEBI:15378"/>
        <dbReference type="ChEBI" id="CHEBI:33737"/>
        <dbReference type="ChEBI" id="CHEBI:33738"/>
        <dbReference type="ChEBI" id="CHEBI:58272"/>
        <dbReference type="ChEBI" id="CHEBI:59776"/>
        <dbReference type="EC" id="1.2.7.6"/>
    </reaction>
</comment>
<comment type="cofactor">
    <cofactor evidence="8">
        <name>[4Fe-4S] cluster</name>
        <dbReference type="ChEBI" id="CHEBI:49883"/>
    </cofactor>
    <text evidence="1">Binds 1 [4Fe-4S] cluster per subunit.</text>
</comment>
<comment type="cofactor">
    <cofactor evidence="3 9">
        <name>tungstopterin</name>
        <dbReference type="ChEBI" id="CHEBI:30402"/>
    </cofactor>
    <text evidence="3">Binds 1 tungstopterin cofactor per subunit.</text>
</comment>
<comment type="activity regulation">
    <text evidence="2 3">Sensitive to oxygen (PubMed:11265456, PubMed:7721730). Activity increased by 58%-93% in the presence of acetyl phosphate, 3-phosphoglycerate or 2,3-bisphosphoglycerate at 10 mM concentration (PubMed:7721730). Inhibited by up to 25% in the presence of crotonaldehyde or formaldehyde at 10 mM concentration (PubMed:7721730). Inhibited by up to 50% by sodium dithionate (PubMed:7721730). 3.5-fold increase in activity observed by addition of potassium phosphate or sodium arsenate at 200 mM concentration (PubMed:7721730). Activity enhanced by potassium chloride, sodium citrate or sodium sulfate at 200 mM concentration (PubMed:7721730).</text>
</comment>
<comment type="biophysicochemical properties">
    <kinetics>
        <KM evidence="3">30 uM for glyceraldehyde-3-phosphate</KM>
        <KM evidence="3">0.43 mM for benzyl viologen</KM>
        <KM evidence="3">6 uM for ferredoxin (in the presence of 0.40 mM GAP)</KM>
        <KM evidence="3">28 uM for glyceraldehyde-3-phosphate (in the presence of 100 uM ferredoxin)</KM>
        <Vmax evidence="3">350.0 umol/min/mg enzyme with glyceraldehyde-3-phosphate as substrate (in the presence of 3 mM benzyl viologen)</Vmax>
        <Vmax evidence="3">310.0 umol/min/mg enzyme with benzyl viologen as substrate</Vmax>
        <Vmax evidence="3">90.0 umol/min/mg enzyme with ferredoxin as substrate</Vmax>
        <Vmax evidence="3">78.0 umol/min/mg enzyme with glyceraldehyde-3-phosphate as substrate (in the presence of 100 uM ferredoxin)</Vmax>
    </kinetics>
    <temperatureDependence>
        <text evidence="2">Stable at 80 degrees Celsius for 15 minutes.</text>
    </temperatureDependence>
</comment>
<comment type="subunit">
    <text evidence="2 3">Monomer.</text>
</comment>
<comment type="induction">
    <text evidence="4">Transcription is significantly stimulated within 10 minutes after addition of cellobiose to a pyruvate-grown culture.</text>
</comment>
<comment type="miscellaneous">
    <text evidence="2">Two zinc atoms per subunit with no known function have been observed.</text>
</comment>
<comment type="similarity">
    <text evidence="7">Belongs to the AOR/FOR family.</text>
</comment>